<reference key="1">
    <citation type="journal article" date="2002" name="Gene">
        <title>Molecular characterization of the equine AEG1 locus.</title>
        <authorList>
            <person name="Giese A."/>
            <person name="Jude R."/>
            <person name="Kuiper H."/>
            <person name="Piumi F."/>
            <person name="Schambony A."/>
            <person name="Guerin G."/>
            <person name="Distl O."/>
            <person name="Topfer-Petersen E."/>
            <person name="Leeb T."/>
        </authorList>
    </citation>
    <scope>NUCLEOTIDE SEQUENCE [GENOMIC DNA]</scope>
</reference>
<evidence type="ECO:0000250" key="1"/>
<evidence type="ECO:0000250" key="2">
    <source>
        <dbReference type="UniProtKB" id="P00558"/>
    </source>
</evidence>
<evidence type="ECO:0000250" key="3">
    <source>
        <dbReference type="UniProtKB" id="P09041"/>
    </source>
</evidence>
<evidence type="ECO:0000250" key="4">
    <source>
        <dbReference type="UniProtKB" id="Q7SIB7"/>
    </source>
</evidence>
<evidence type="ECO:0000305" key="5"/>
<comment type="function">
    <text evidence="3">Essential for sperm motility and male fertility but is not required for the completion of spermatogenesis.</text>
</comment>
<comment type="catalytic activity">
    <reaction evidence="3">
        <text>(2R)-3-phosphoglycerate + ATP = (2R)-3-phospho-glyceroyl phosphate + ADP</text>
        <dbReference type="Rhea" id="RHEA:14801"/>
        <dbReference type="ChEBI" id="CHEBI:30616"/>
        <dbReference type="ChEBI" id="CHEBI:57604"/>
        <dbReference type="ChEBI" id="CHEBI:58272"/>
        <dbReference type="ChEBI" id="CHEBI:456216"/>
        <dbReference type="EC" id="2.7.2.3"/>
    </reaction>
</comment>
<comment type="cofactor">
    <cofactor evidence="2">
        <name>Mg(2+)</name>
        <dbReference type="ChEBI" id="CHEBI:18420"/>
    </cofactor>
</comment>
<comment type="pathway">
    <text>Carbohydrate degradation; glycolysis; pyruvate from D-glyceraldehyde 3-phosphate: step 2/5.</text>
</comment>
<comment type="subunit">
    <text evidence="3">Monomer.</text>
</comment>
<comment type="subcellular location">
    <subcellularLocation>
        <location evidence="1">Cytoplasm</location>
    </subcellularLocation>
</comment>
<comment type="similarity">
    <text evidence="5">Belongs to the phosphoglycerate kinase family.</text>
</comment>
<protein>
    <recommendedName>
        <fullName>Phosphoglycerate kinase 2</fullName>
        <ecNumber evidence="3">2.7.2.3</ecNumber>
    </recommendedName>
    <alternativeName>
        <fullName>Phosphoglycerate kinase, testis specific</fullName>
    </alternativeName>
</protein>
<dbReference type="EC" id="2.7.2.3" evidence="3"/>
<dbReference type="EMBL" id="AJ315378">
    <property type="protein sequence ID" value="CAD43034.1"/>
    <property type="molecule type" value="Genomic_DNA"/>
</dbReference>
<dbReference type="RefSeq" id="NP_001077063.1">
    <property type="nucleotide sequence ID" value="NM_001083594.1"/>
</dbReference>
<dbReference type="SMR" id="Q8MIF7"/>
<dbReference type="STRING" id="9796.ENSECAP00000039253"/>
<dbReference type="PaxDb" id="9796-ENSECAP00000039253"/>
<dbReference type="PeptideAtlas" id="Q8MIF7"/>
<dbReference type="Ensembl" id="ENSECAT00000003386.3">
    <property type="protein sequence ID" value="ENSECAP00000039253.1"/>
    <property type="gene ID" value="ENSECAG00000003389.3"/>
</dbReference>
<dbReference type="GeneID" id="100036552"/>
<dbReference type="KEGG" id="ecb:100036552"/>
<dbReference type="CTD" id="5232"/>
<dbReference type="GeneTree" id="ENSGT00390000008820"/>
<dbReference type="InParanoid" id="Q8MIF7"/>
<dbReference type="OMA" id="GPETNKK"/>
<dbReference type="OrthoDB" id="275353at2759"/>
<dbReference type="UniPathway" id="UPA00109">
    <property type="reaction ID" value="UER00185"/>
</dbReference>
<dbReference type="Proteomes" id="UP000002281">
    <property type="component" value="Chromosome 20"/>
</dbReference>
<dbReference type="Bgee" id="ENSECAG00000003389">
    <property type="expression patterns" value="Expressed in testis and 3 other cell types or tissues"/>
</dbReference>
<dbReference type="GO" id="GO:0005829">
    <property type="term" value="C:cytosol"/>
    <property type="evidence" value="ECO:0000318"/>
    <property type="project" value="GO_Central"/>
</dbReference>
<dbReference type="GO" id="GO:0035686">
    <property type="term" value="C:sperm fibrous sheath"/>
    <property type="evidence" value="ECO:0000318"/>
    <property type="project" value="GO_Central"/>
</dbReference>
<dbReference type="GO" id="GO:0043531">
    <property type="term" value="F:ADP binding"/>
    <property type="evidence" value="ECO:0000318"/>
    <property type="project" value="GO_Central"/>
</dbReference>
<dbReference type="GO" id="GO:0005524">
    <property type="term" value="F:ATP binding"/>
    <property type="evidence" value="ECO:0000250"/>
    <property type="project" value="UniProtKB"/>
</dbReference>
<dbReference type="GO" id="GO:0046872">
    <property type="term" value="F:metal ion binding"/>
    <property type="evidence" value="ECO:0007669"/>
    <property type="project" value="UniProtKB-KW"/>
</dbReference>
<dbReference type="GO" id="GO:0004618">
    <property type="term" value="F:phosphoglycerate kinase activity"/>
    <property type="evidence" value="ECO:0000250"/>
    <property type="project" value="UniProtKB"/>
</dbReference>
<dbReference type="GO" id="GO:0006094">
    <property type="term" value="P:gluconeogenesis"/>
    <property type="evidence" value="ECO:0000318"/>
    <property type="project" value="GO_Central"/>
</dbReference>
<dbReference type="GO" id="GO:0006096">
    <property type="term" value="P:glycolytic process"/>
    <property type="evidence" value="ECO:0000318"/>
    <property type="project" value="GO_Central"/>
</dbReference>
<dbReference type="CDD" id="cd00318">
    <property type="entry name" value="Phosphoglycerate_kinase"/>
    <property type="match status" value="1"/>
</dbReference>
<dbReference type="FunFam" id="3.40.50.1260:FF:000019">
    <property type="entry name" value="Phosphoglycerate kinase 1"/>
    <property type="match status" value="1"/>
</dbReference>
<dbReference type="FunFam" id="3.40.50.1260:FF:000031">
    <property type="entry name" value="Phosphoglycerate kinase 1"/>
    <property type="match status" value="1"/>
</dbReference>
<dbReference type="Gene3D" id="3.40.50.1260">
    <property type="entry name" value="Phosphoglycerate kinase, N-terminal domain"/>
    <property type="match status" value="3"/>
</dbReference>
<dbReference type="HAMAP" id="MF_00145">
    <property type="entry name" value="Phosphoglyc_kinase"/>
    <property type="match status" value="1"/>
</dbReference>
<dbReference type="InterPro" id="IPR001576">
    <property type="entry name" value="Phosphoglycerate_kinase"/>
</dbReference>
<dbReference type="InterPro" id="IPR015824">
    <property type="entry name" value="Phosphoglycerate_kinase_N"/>
</dbReference>
<dbReference type="InterPro" id="IPR036043">
    <property type="entry name" value="Phosphoglycerate_kinase_sf"/>
</dbReference>
<dbReference type="PANTHER" id="PTHR11406">
    <property type="entry name" value="PHOSPHOGLYCERATE KINASE"/>
    <property type="match status" value="1"/>
</dbReference>
<dbReference type="PANTHER" id="PTHR11406:SF10">
    <property type="entry name" value="PHOSPHOGLYCERATE KINASE 2"/>
    <property type="match status" value="1"/>
</dbReference>
<dbReference type="Pfam" id="PF00162">
    <property type="entry name" value="PGK"/>
    <property type="match status" value="1"/>
</dbReference>
<dbReference type="PIRSF" id="PIRSF000724">
    <property type="entry name" value="Pgk"/>
    <property type="match status" value="1"/>
</dbReference>
<dbReference type="PRINTS" id="PR00477">
    <property type="entry name" value="PHGLYCKINASE"/>
</dbReference>
<dbReference type="SUPFAM" id="SSF53748">
    <property type="entry name" value="Phosphoglycerate kinase"/>
    <property type="match status" value="1"/>
</dbReference>
<sequence length="417" mass="44879">MSLSKKLTLDKLDVKGKRIIMRVDFNVPMKKNQITNNQRIKASIPSIKYCLDNGARSVVLMSHLGRPDGVPMPDKYSLEPVAAELKSLLGKDVLFLKDCVGSEVEKACANPATGSVILLENLRFHVEEEGKGQDPSGNKLKAEAGKIEAFRASLSKLGDVYVNDAFGTAHRAHSSMVGINLPQKASGFLMKKELEYFAKALENPERPFLAILGGAKVADKIQLIKNMLDKVNEMIIGGGMAYTFLKVLNNMEIGASLFDEEGAKIVKDIMAKANKNGVRITFPVDFVTADKFEENAKVGQATVASGIPAGWMGLDCGPETNKKYAQVMAQAKLIVWNGPVGVFEWDAFAKGTKALMDEIVKATSRGCITIIGGGDTATCCAKWNTEDKVSHVSTGGGASLELLEGKILPGVDALSNL</sequence>
<feature type="initiator methionine" description="Removed" evidence="2">
    <location>
        <position position="1"/>
    </location>
</feature>
<feature type="chain" id="PRO_0000145830" description="Phosphoglycerate kinase 2">
    <location>
        <begin position="2"/>
        <end position="417"/>
    </location>
</feature>
<feature type="binding site" evidence="2">
    <location>
        <position position="23"/>
    </location>
    <ligand>
        <name>(2R)-3-phosphoglycerate</name>
        <dbReference type="ChEBI" id="CHEBI:58272"/>
    </ligand>
</feature>
<feature type="binding site" evidence="3">
    <location>
        <position position="24"/>
    </location>
    <ligand>
        <name>(2R)-3-phosphoglycerate</name>
        <dbReference type="ChEBI" id="CHEBI:58272"/>
    </ligand>
</feature>
<feature type="binding site" evidence="2">
    <location>
        <position position="25"/>
    </location>
    <ligand>
        <name>(2R)-3-phosphoglycerate</name>
        <dbReference type="ChEBI" id="CHEBI:58272"/>
    </ligand>
</feature>
<feature type="binding site" evidence="3">
    <location>
        <position position="26"/>
    </location>
    <ligand>
        <name>(2R)-3-phosphoglycerate</name>
        <dbReference type="ChEBI" id="CHEBI:58272"/>
    </ligand>
</feature>
<feature type="binding site" evidence="2">
    <location>
        <position position="38"/>
    </location>
    <ligand>
        <name>(2R)-3-phosphoglycerate</name>
        <dbReference type="ChEBI" id="CHEBI:58272"/>
    </ligand>
</feature>
<feature type="binding site" evidence="3">
    <location>
        <position position="39"/>
    </location>
    <ligand>
        <name>(2R)-3-phosphoglycerate</name>
        <dbReference type="ChEBI" id="CHEBI:58272"/>
    </ligand>
</feature>
<feature type="binding site" evidence="2">
    <location>
        <position position="62"/>
    </location>
    <ligand>
        <name>(2R)-3-phosphoglycerate</name>
        <dbReference type="ChEBI" id="CHEBI:58272"/>
    </ligand>
</feature>
<feature type="binding site" evidence="3">
    <location>
        <position position="63"/>
    </location>
    <ligand>
        <name>(2R)-3-phosphoglycerate</name>
        <dbReference type="ChEBI" id="CHEBI:58272"/>
    </ligand>
</feature>
<feature type="binding site" evidence="2">
    <location>
        <position position="65"/>
    </location>
    <ligand>
        <name>(2R)-3-phosphoglycerate</name>
        <dbReference type="ChEBI" id="CHEBI:58272"/>
    </ligand>
</feature>
<feature type="binding site" evidence="3">
    <location>
        <position position="66"/>
    </location>
    <ligand>
        <name>(2R)-3-phosphoglycerate</name>
        <dbReference type="ChEBI" id="CHEBI:58272"/>
    </ligand>
</feature>
<feature type="binding site" evidence="2">
    <location>
        <position position="122"/>
    </location>
    <ligand>
        <name>(2R)-3-phosphoglycerate</name>
        <dbReference type="ChEBI" id="CHEBI:58272"/>
    </ligand>
</feature>
<feature type="binding site" evidence="3">
    <location>
        <position position="123"/>
    </location>
    <ligand>
        <name>(2R)-3-phosphoglycerate</name>
        <dbReference type="ChEBI" id="CHEBI:58272"/>
    </ligand>
</feature>
<feature type="binding site" evidence="2">
    <location>
        <position position="170"/>
    </location>
    <ligand>
        <name>(2R)-3-phosphoglycerate</name>
        <dbReference type="ChEBI" id="CHEBI:58272"/>
    </ligand>
</feature>
<feature type="binding site" evidence="3">
    <location>
        <position position="171"/>
    </location>
    <ligand>
        <name>(2R)-3-phosphoglycerate</name>
        <dbReference type="ChEBI" id="CHEBI:58272"/>
    </ligand>
</feature>
<feature type="binding site" evidence="2">
    <location>
        <position position="214"/>
    </location>
    <ligand>
        <name>ADP</name>
        <dbReference type="ChEBI" id="CHEBI:456216"/>
    </ligand>
</feature>
<feature type="binding site" evidence="2">
    <location>
        <position position="214"/>
    </location>
    <ligand>
        <name>CDP</name>
        <dbReference type="ChEBI" id="CHEBI:58069"/>
    </ligand>
</feature>
<feature type="binding site" evidence="4">
    <location>
        <position position="215"/>
    </location>
    <ligand>
        <name>AMP</name>
        <dbReference type="ChEBI" id="CHEBI:456215"/>
    </ligand>
</feature>
<feature type="binding site" evidence="3">
    <location>
        <position position="215"/>
    </location>
    <ligand>
        <name>ATP</name>
        <dbReference type="ChEBI" id="CHEBI:30616"/>
    </ligand>
</feature>
<feature type="binding site" evidence="2">
    <location>
        <position position="215"/>
    </location>
    <ligand>
        <name>Mg(2+)</name>
        <dbReference type="ChEBI" id="CHEBI:18420"/>
    </ligand>
</feature>
<feature type="binding site" evidence="4">
    <location>
        <position position="216"/>
    </location>
    <ligand>
        <name>AMP</name>
        <dbReference type="ChEBI" id="CHEBI:456215"/>
    </ligand>
</feature>
<feature type="binding site" evidence="2">
    <location>
        <position position="218"/>
    </location>
    <ligand>
        <name>Mg(2+)</name>
        <dbReference type="ChEBI" id="CHEBI:18420"/>
    </ligand>
</feature>
<feature type="binding site" evidence="2">
    <location>
        <position position="219"/>
    </location>
    <ligand>
        <name>CDP</name>
        <dbReference type="ChEBI" id="CHEBI:58069"/>
    </ligand>
</feature>
<feature type="binding site" evidence="2">
    <location>
        <position position="219"/>
    </location>
    <ligand>
        <name>Mg(2+)</name>
        <dbReference type="ChEBI" id="CHEBI:18420"/>
    </ligand>
</feature>
<feature type="binding site" evidence="4">
    <location>
        <position position="220"/>
    </location>
    <ligand>
        <name>AMP</name>
        <dbReference type="ChEBI" id="CHEBI:456215"/>
    </ligand>
</feature>
<feature type="binding site" evidence="3">
    <location>
        <position position="220"/>
    </location>
    <ligand>
        <name>ATP</name>
        <dbReference type="ChEBI" id="CHEBI:30616"/>
    </ligand>
</feature>
<feature type="binding site" evidence="2">
    <location>
        <position position="238"/>
    </location>
    <ligand>
        <name>ADP</name>
        <dbReference type="ChEBI" id="CHEBI:456216"/>
    </ligand>
</feature>
<feature type="binding site" evidence="2">
    <location>
        <position position="238"/>
    </location>
    <ligand>
        <name>CDP</name>
        <dbReference type="ChEBI" id="CHEBI:58069"/>
    </ligand>
</feature>
<feature type="binding site" evidence="4">
    <location>
        <position position="239"/>
    </location>
    <ligand>
        <name>AMP</name>
        <dbReference type="ChEBI" id="CHEBI:456215"/>
    </ligand>
</feature>
<feature type="binding site" evidence="3">
    <location>
        <position position="239"/>
    </location>
    <ligand>
        <name>ATP</name>
        <dbReference type="ChEBI" id="CHEBI:30616"/>
    </ligand>
</feature>
<feature type="binding site" evidence="4">
    <location>
        <position position="313"/>
    </location>
    <ligand>
        <name>AMP</name>
        <dbReference type="ChEBI" id="CHEBI:456215"/>
    </ligand>
</feature>
<feature type="binding site" evidence="3">
    <location>
        <position position="313"/>
    </location>
    <ligand>
        <name>ATP</name>
        <dbReference type="ChEBI" id="CHEBI:30616"/>
    </ligand>
</feature>
<feature type="binding site" evidence="2">
    <location>
        <position position="338"/>
    </location>
    <ligand>
        <name>CDP</name>
        <dbReference type="ChEBI" id="CHEBI:58069"/>
    </ligand>
</feature>
<feature type="binding site" evidence="2">
    <location>
        <position position="340"/>
    </location>
    <ligand>
        <name>CDP</name>
        <dbReference type="ChEBI" id="CHEBI:58069"/>
    </ligand>
</feature>
<feature type="binding site" evidence="2">
    <location>
        <position position="343"/>
    </location>
    <ligand>
        <name>ADP</name>
        <dbReference type="ChEBI" id="CHEBI:456216"/>
    </ligand>
</feature>
<feature type="binding site" evidence="2">
    <location>
        <position position="343"/>
    </location>
    <ligand>
        <name>CDP</name>
        <dbReference type="ChEBI" id="CHEBI:58069"/>
    </ligand>
</feature>
<feature type="binding site" evidence="4">
    <location>
        <position position="344"/>
    </location>
    <ligand>
        <name>AMP</name>
        <dbReference type="ChEBI" id="CHEBI:456215"/>
    </ligand>
</feature>
<feature type="binding site" evidence="3">
    <location>
        <position position="344"/>
    </location>
    <ligand>
        <name>ATP</name>
        <dbReference type="ChEBI" id="CHEBI:30616"/>
    </ligand>
</feature>
<feature type="binding site" evidence="3">
    <location>
        <position position="375"/>
    </location>
    <ligand>
        <name>ATP</name>
        <dbReference type="ChEBI" id="CHEBI:30616"/>
    </ligand>
</feature>
<feature type="binding site" evidence="4">
    <location>
        <position position="375"/>
    </location>
    <ligand>
        <name>Mg(2+)</name>
        <dbReference type="ChEBI" id="CHEBI:18420"/>
    </ligand>
</feature>
<feature type="binding site" evidence="4">
    <location>
        <position position="376"/>
    </location>
    <ligand>
        <name>ATP</name>
        <dbReference type="ChEBI" id="CHEBI:30616"/>
    </ligand>
</feature>
<feature type="modified residue" description="N-acetylserine" evidence="2">
    <location>
        <position position="2"/>
    </location>
</feature>
<feature type="modified residue" description="Phosphoserine" evidence="2">
    <location>
        <position position="2"/>
    </location>
</feature>
<feature type="modified residue" description="Phosphoserine" evidence="2">
    <location>
        <position position="4"/>
    </location>
</feature>
<feature type="modified residue" description="N6-acetyllysine" evidence="2">
    <location>
        <position position="11"/>
    </location>
</feature>
<feature type="modified residue" description="N6-acetyllysine" evidence="2">
    <location>
        <position position="48"/>
    </location>
</feature>
<feature type="modified residue" description="N6-acetyllysine" evidence="2">
    <location>
        <position position="75"/>
    </location>
</feature>
<feature type="modified residue" description="N6-acetyllysine" evidence="2">
    <location>
        <position position="86"/>
    </location>
</feature>
<feature type="modified residue" description="N6-acetyllysine" evidence="2">
    <location>
        <position position="97"/>
    </location>
</feature>
<feature type="modified residue" description="N6-acetyllysine" evidence="2">
    <location>
        <position position="131"/>
    </location>
</feature>
<feature type="modified residue" description="N6-acetyllysine" evidence="2">
    <location>
        <position position="146"/>
    </location>
</feature>
<feature type="modified residue" description="Phosphotyrosine" evidence="2">
    <location>
        <position position="196"/>
    </location>
</feature>
<feature type="modified residue" description="N6-acetyllysine" evidence="2">
    <location>
        <position position="199"/>
    </location>
</feature>
<feature type="modified residue" description="N6-acetyllysine" evidence="2">
    <location>
        <position position="267"/>
    </location>
</feature>
<feature type="modified residue" description="N6-acetyllysine" evidence="2">
    <location>
        <position position="291"/>
    </location>
</feature>
<accession>Q8MIF7</accession>
<name>PGK2_HORSE</name>
<proteinExistence type="inferred from homology"/>
<keyword id="KW-0007">Acetylation</keyword>
<keyword id="KW-0067">ATP-binding</keyword>
<keyword id="KW-0963">Cytoplasm</keyword>
<keyword id="KW-0324">Glycolysis</keyword>
<keyword id="KW-0418">Kinase</keyword>
<keyword id="KW-0460">Magnesium</keyword>
<keyword id="KW-0479">Metal-binding</keyword>
<keyword id="KW-0547">Nucleotide-binding</keyword>
<keyword id="KW-0597">Phosphoprotein</keyword>
<keyword id="KW-1185">Reference proteome</keyword>
<keyword id="KW-0808">Transferase</keyword>
<organism>
    <name type="scientific">Equus caballus</name>
    <name type="common">Horse</name>
    <dbReference type="NCBI Taxonomy" id="9796"/>
    <lineage>
        <taxon>Eukaryota</taxon>
        <taxon>Metazoa</taxon>
        <taxon>Chordata</taxon>
        <taxon>Craniata</taxon>
        <taxon>Vertebrata</taxon>
        <taxon>Euteleostomi</taxon>
        <taxon>Mammalia</taxon>
        <taxon>Eutheria</taxon>
        <taxon>Laurasiatheria</taxon>
        <taxon>Perissodactyla</taxon>
        <taxon>Equidae</taxon>
        <taxon>Equus</taxon>
    </lineage>
</organism>
<gene>
    <name type="primary">PGK2</name>
</gene>